<accession>A6UPS4</accession>
<sequence length="122" mass="13581">MKEYFLIGIGGFTGAVLRYVISGIIPVKFGIPTGTLMVNLIGSFIVGFLMYSSLFTGISYEYRLFIITGFCGALTTFSTFSYESFSLLEQHYFIKSGINILTNVTGCISMIYFGRMVSSSFW</sequence>
<proteinExistence type="inferred from homology"/>
<name>FLUC_METVS</name>
<comment type="function">
    <text evidence="1">Fluoride-specific ion channel. Important for reducing fluoride concentration in the cell, thus reducing its toxicity.</text>
</comment>
<comment type="catalytic activity">
    <reaction evidence="1">
        <text>fluoride(in) = fluoride(out)</text>
        <dbReference type="Rhea" id="RHEA:76159"/>
        <dbReference type="ChEBI" id="CHEBI:17051"/>
    </reaction>
    <physiologicalReaction direction="left-to-right" evidence="1">
        <dbReference type="Rhea" id="RHEA:76160"/>
    </physiologicalReaction>
</comment>
<comment type="activity regulation">
    <text evidence="1">Na(+) is not transported, but it plays an essential structural role and its presence is essential for fluoride channel function.</text>
</comment>
<comment type="subcellular location">
    <subcellularLocation>
        <location evidence="1">Cell membrane</location>
        <topology evidence="1">Multi-pass membrane protein</topology>
    </subcellularLocation>
</comment>
<comment type="similarity">
    <text evidence="1">Belongs to the fluoride channel Fluc/FEX (TC 1.A.43) family.</text>
</comment>
<evidence type="ECO:0000255" key="1">
    <source>
        <dbReference type="HAMAP-Rule" id="MF_00454"/>
    </source>
</evidence>
<feature type="chain" id="PRO_1000026400" description="Fluoride-specific ion channel FluC">
    <location>
        <begin position="1"/>
        <end position="122"/>
    </location>
</feature>
<feature type="transmembrane region" description="Helical" evidence="1">
    <location>
        <begin position="5"/>
        <end position="25"/>
    </location>
</feature>
<feature type="transmembrane region" description="Helical" evidence="1">
    <location>
        <begin position="29"/>
        <end position="49"/>
    </location>
</feature>
<feature type="transmembrane region" description="Helical" evidence="1">
    <location>
        <begin position="65"/>
        <end position="85"/>
    </location>
</feature>
<feature type="transmembrane region" description="Helical" evidence="1">
    <location>
        <begin position="93"/>
        <end position="113"/>
    </location>
</feature>
<feature type="binding site" evidence="1">
    <location>
        <position position="72"/>
    </location>
    <ligand>
        <name>Na(+)</name>
        <dbReference type="ChEBI" id="CHEBI:29101"/>
        <note>structural</note>
    </ligand>
</feature>
<feature type="binding site" evidence="1">
    <location>
        <position position="75"/>
    </location>
    <ligand>
        <name>Na(+)</name>
        <dbReference type="ChEBI" id="CHEBI:29101"/>
        <note>structural</note>
    </ligand>
</feature>
<organism>
    <name type="scientific">Methanococcus vannielii (strain ATCC 35089 / DSM 1224 / JCM 13029 / OCM 148 / SB)</name>
    <dbReference type="NCBI Taxonomy" id="406327"/>
    <lineage>
        <taxon>Archaea</taxon>
        <taxon>Methanobacteriati</taxon>
        <taxon>Methanobacteriota</taxon>
        <taxon>Methanomada group</taxon>
        <taxon>Methanococci</taxon>
        <taxon>Methanococcales</taxon>
        <taxon>Methanococcaceae</taxon>
        <taxon>Methanococcus</taxon>
    </lineage>
</organism>
<dbReference type="EMBL" id="CP000742">
    <property type="protein sequence ID" value="ABR54496.1"/>
    <property type="molecule type" value="Genomic_DNA"/>
</dbReference>
<dbReference type="RefSeq" id="WP_011972399.1">
    <property type="nucleotide sequence ID" value="NC_009634.1"/>
</dbReference>
<dbReference type="SMR" id="A6UPS4"/>
<dbReference type="STRING" id="406327.Mevan_0590"/>
<dbReference type="GeneID" id="5326100"/>
<dbReference type="KEGG" id="mvn:Mevan_0590"/>
<dbReference type="eggNOG" id="arCOG04701">
    <property type="taxonomic scope" value="Archaea"/>
</dbReference>
<dbReference type="HOGENOM" id="CLU_114342_3_0_2"/>
<dbReference type="OrthoDB" id="253428at2157"/>
<dbReference type="Proteomes" id="UP000001107">
    <property type="component" value="Chromosome"/>
</dbReference>
<dbReference type="GO" id="GO:0005886">
    <property type="term" value="C:plasma membrane"/>
    <property type="evidence" value="ECO:0007669"/>
    <property type="project" value="UniProtKB-SubCell"/>
</dbReference>
<dbReference type="GO" id="GO:0062054">
    <property type="term" value="F:fluoride channel activity"/>
    <property type="evidence" value="ECO:0007669"/>
    <property type="project" value="UniProtKB-UniRule"/>
</dbReference>
<dbReference type="GO" id="GO:0046872">
    <property type="term" value="F:metal ion binding"/>
    <property type="evidence" value="ECO:0007669"/>
    <property type="project" value="UniProtKB-KW"/>
</dbReference>
<dbReference type="GO" id="GO:0140114">
    <property type="term" value="P:cellular detoxification of fluoride"/>
    <property type="evidence" value="ECO:0007669"/>
    <property type="project" value="UniProtKB-UniRule"/>
</dbReference>
<dbReference type="HAMAP" id="MF_00454">
    <property type="entry name" value="FluC"/>
    <property type="match status" value="1"/>
</dbReference>
<dbReference type="InterPro" id="IPR003691">
    <property type="entry name" value="FluC"/>
</dbReference>
<dbReference type="NCBIfam" id="TIGR00494">
    <property type="entry name" value="crcB"/>
    <property type="match status" value="1"/>
</dbReference>
<dbReference type="PANTHER" id="PTHR28259">
    <property type="entry name" value="FLUORIDE EXPORT PROTEIN 1-RELATED"/>
    <property type="match status" value="1"/>
</dbReference>
<dbReference type="PANTHER" id="PTHR28259:SF1">
    <property type="entry name" value="FLUORIDE EXPORT PROTEIN 1-RELATED"/>
    <property type="match status" value="1"/>
</dbReference>
<dbReference type="Pfam" id="PF02537">
    <property type="entry name" value="CRCB"/>
    <property type="match status" value="1"/>
</dbReference>
<protein>
    <recommendedName>
        <fullName evidence="1">Fluoride-specific ion channel FluC</fullName>
    </recommendedName>
</protein>
<keyword id="KW-1003">Cell membrane</keyword>
<keyword id="KW-0407">Ion channel</keyword>
<keyword id="KW-0406">Ion transport</keyword>
<keyword id="KW-0472">Membrane</keyword>
<keyword id="KW-0479">Metal-binding</keyword>
<keyword id="KW-0915">Sodium</keyword>
<keyword id="KW-0812">Transmembrane</keyword>
<keyword id="KW-1133">Transmembrane helix</keyword>
<keyword id="KW-0813">Transport</keyword>
<reference key="1">
    <citation type="submission" date="2007-06" db="EMBL/GenBank/DDBJ databases">
        <title>Complete sequence of Methanococcus vannielii SB.</title>
        <authorList>
            <consortium name="US DOE Joint Genome Institute"/>
            <person name="Copeland A."/>
            <person name="Lucas S."/>
            <person name="Lapidus A."/>
            <person name="Barry K."/>
            <person name="Glavina del Rio T."/>
            <person name="Dalin E."/>
            <person name="Tice H."/>
            <person name="Pitluck S."/>
            <person name="Chain P."/>
            <person name="Malfatti S."/>
            <person name="Shin M."/>
            <person name="Vergez L."/>
            <person name="Schmutz J."/>
            <person name="Larimer F."/>
            <person name="Land M."/>
            <person name="Hauser L."/>
            <person name="Kyrpides N."/>
            <person name="Anderson I."/>
            <person name="Sieprawska-Lupa M."/>
            <person name="Whitman W.B."/>
            <person name="Richardson P."/>
        </authorList>
    </citation>
    <scope>NUCLEOTIDE SEQUENCE [LARGE SCALE GENOMIC DNA]</scope>
    <source>
        <strain>ATCC 35089 / DSM 1224 / JCM 13029 / OCM 148 / SB</strain>
    </source>
</reference>
<gene>
    <name evidence="1" type="primary">fluC</name>
    <name evidence="1" type="synonym">crcB</name>
    <name type="ordered locus">Mevan_0590</name>
</gene>